<name>TRM11_MOUSE</name>
<dbReference type="EC" id="2.1.1.214" evidence="1"/>
<dbReference type="EMBL" id="AF532979">
    <property type="protein sequence ID" value="AAQ10286.1"/>
    <property type="molecule type" value="mRNA"/>
</dbReference>
<dbReference type="EMBL" id="AK010722">
    <property type="protein sequence ID" value="BAB27142.1"/>
    <property type="molecule type" value="mRNA"/>
</dbReference>
<dbReference type="EMBL" id="BC048703">
    <property type="protein sequence ID" value="AAH48703.1"/>
    <property type="molecule type" value="mRNA"/>
</dbReference>
<dbReference type="CCDS" id="CCDS23763.1">
    <molecule id="Q9CWH5-1"/>
</dbReference>
<dbReference type="RefSeq" id="NP_001345735.1">
    <molecule id="Q9CWH5-2"/>
    <property type="nucleotide sequence ID" value="NM_001358806.1"/>
</dbReference>
<dbReference type="RefSeq" id="XP_006512947.1">
    <property type="nucleotide sequence ID" value="XM_006512884.3"/>
</dbReference>
<dbReference type="RefSeq" id="XP_030101179.1">
    <molecule id="Q9CWH5-2"/>
    <property type="nucleotide sequence ID" value="XM_030245319.2"/>
</dbReference>
<dbReference type="RefSeq" id="XP_030101180.1">
    <molecule id="Q9CWH5-2"/>
    <property type="nucleotide sequence ID" value="XM_030245320.2"/>
</dbReference>
<dbReference type="RefSeq" id="XP_036011941.1">
    <molecule id="Q9CWH5-2"/>
    <property type="nucleotide sequence ID" value="XM_036156048.1"/>
</dbReference>
<dbReference type="SMR" id="Q9CWH5"/>
<dbReference type="BioGRID" id="216187">
    <property type="interactions" value="25"/>
</dbReference>
<dbReference type="FunCoup" id="Q9CWH5">
    <property type="interactions" value="1318"/>
</dbReference>
<dbReference type="STRING" id="10090.ENSMUSP00000019927"/>
<dbReference type="GlyGen" id="Q9CWH5">
    <property type="glycosylation" value="1 site, 1 O-linked glycan (1 site)"/>
</dbReference>
<dbReference type="iPTMnet" id="Q9CWH5"/>
<dbReference type="PhosphoSitePlus" id="Q9CWH5"/>
<dbReference type="PaxDb" id="10090-ENSMUSP00000019927"/>
<dbReference type="PeptideAtlas" id="Q9CWH5"/>
<dbReference type="ProteomicsDB" id="298229">
    <molecule id="Q9CWH5-1"/>
</dbReference>
<dbReference type="ProteomicsDB" id="298230">
    <molecule id="Q9CWH5-2"/>
</dbReference>
<dbReference type="Pumba" id="Q9CWH5"/>
<dbReference type="DNASU" id="73681"/>
<dbReference type="UCSC" id="uc007etf.1">
    <molecule id="Q9CWH5-2"/>
    <property type="organism name" value="mouse"/>
</dbReference>
<dbReference type="AGR" id="MGI:1920931"/>
<dbReference type="MGI" id="MGI:1920931">
    <property type="gene designation" value="Trmt11"/>
</dbReference>
<dbReference type="eggNOG" id="KOG2671">
    <property type="taxonomic scope" value="Eukaryota"/>
</dbReference>
<dbReference type="InParanoid" id="Q9CWH5"/>
<dbReference type="PhylomeDB" id="Q9CWH5"/>
<dbReference type="BioGRID-ORCS" id="73681">
    <property type="hits" value="6 hits in 79 CRISPR screens"/>
</dbReference>
<dbReference type="PRO" id="PR:Q9CWH5"/>
<dbReference type="Proteomes" id="UP000000589">
    <property type="component" value="Unplaced"/>
</dbReference>
<dbReference type="RNAct" id="Q9CWH5">
    <property type="molecule type" value="protein"/>
</dbReference>
<dbReference type="GO" id="GO:0005737">
    <property type="term" value="C:cytoplasm"/>
    <property type="evidence" value="ECO:0000250"/>
    <property type="project" value="UniProtKB"/>
</dbReference>
<dbReference type="GO" id="GO:0043528">
    <property type="term" value="C:tRNA (m2G10) methyltransferase complex"/>
    <property type="evidence" value="ECO:0000250"/>
    <property type="project" value="UniProtKB"/>
</dbReference>
<dbReference type="GO" id="GO:0160102">
    <property type="term" value="F:tRNA (guanine(10)-N2)-methyltransferase activity"/>
    <property type="evidence" value="ECO:0000250"/>
    <property type="project" value="UniProtKB"/>
</dbReference>
<dbReference type="GO" id="GO:0000049">
    <property type="term" value="F:tRNA binding"/>
    <property type="evidence" value="ECO:0007669"/>
    <property type="project" value="UniProtKB-KW"/>
</dbReference>
<dbReference type="GO" id="GO:0032259">
    <property type="term" value="P:methylation"/>
    <property type="evidence" value="ECO:0007669"/>
    <property type="project" value="UniProtKB-KW"/>
</dbReference>
<dbReference type="GO" id="GO:0008033">
    <property type="term" value="P:tRNA processing"/>
    <property type="evidence" value="ECO:0007669"/>
    <property type="project" value="UniProtKB-KW"/>
</dbReference>
<dbReference type="CDD" id="cd02440">
    <property type="entry name" value="AdoMet_MTases"/>
    <property type="match status" value="1"/>
</dbReference>
<dbReference type="FunFam" id="3.40.50.150:FF:000069">
    <property type="entry name" value="tRNA (Guanine(10)-N2)-methyltransferase homolog isoform X2"/>
    <property type="match status" value="1"/>
</dbReference>
<dbReference type="Gene3D" id="3.40.50.150">
    <property type="entry name" value="Vaccinia Virus protein VP39"/>
    <property type="match status" value="1"/>
</dbReference>
<dbReference type="InterPro" id="IPR002052">
    <property type="entry name" value="DNA_methylase_N6_adenine_CS"/>
</dbReference>
<dbReference type="InterPro" id="IPR000241">
    <property type="entry name" value="RlmKL-like_Mtase"/>
</dbReference>
<dbReference type="InterPro" id="IPR029063">
    <property type="entry name" value="SAM-dependent_MTases_sf"/>
</dbReference>
<dbReference type="InterPro" id="IPR016691">
    <property type="entry name" value="tRNA_mtfrase_TRM11"/>
</dbReference>
<dbReference type="PANTHER" id="PTHR13370">
    <property type="entry name" value="RNA METHYLASE-RELATED"/>
    <property type="match status" value="1"/>
</dbReference>
<dbReference type="PANTHER" id="PTHR13370:SF3">
    <property type="entry name" value="TRNA (GUANINE(10)-N2)-METHYLTRANSFERASE HOMOLOG"/>
    <property type="match status" value="1"/>
</dbReference>
<dbReference type="Pfam" id="PF01170">
    <property type="entry name" value="UPF0020"/>
    <property type="match status" value="1"/>
</dbReference>
<dbReference type="PIRSF" id="PIRSF017259">
    <property type="entry name" value="tRNA_mtfrase_TRM11"/>
    <property type="match status" value="1"/>
</dbReference>
<dbReference type="PRINTS" id="PR00507">
    <property type="entry name" value="N12N6MTFRASE"/>
</dbReference>
<dbReference type="SUPFAM" id="SSF53335">
    <property type="entry name" value="S-adenosyl-L-methionine-dependent methyltransferases"/>
    <property type="match status" value="1"/>
</dbReference>
<dbReference type="PROSITE" id="PS00092">
    <property type="entry name" value="N6_MTASE"/>
    <property type="match status" value="1"/>
</dbReference>
<dbReference type="PROSITE" id="PS51627">
    <property type="entry name" value="SAM_MT_TRM11"/>
    <property type="match status" value="1"/>
</dbReference>
<gene>
    <name evidence="4" type="primary">Trmt11</name>
</gene>
<comment type="function">
    <text evidence="1">Catalytic subunit of the TRMT11-TRM112 methyltransferase complex, that specifically mediates the S-adenosyl-L-methionine-dependent N(2)-methylation of guanosine nucleotide at position 10 (m2G10) in tRNAs. This is one of the major tRNA (guanine-N(2))-methyltransferases.</text>
</comment>
<comment type="catalytic activity">
    <reaction evidence="1">
        <text>guanosine(10) in tRNA + S-adenosyl-L-methionine = N(2)-methylguanosine(10) in tRNA + S-adenosyl-L-homocysteine + H(+)</text>
        <dbReference type="Rhea" id="RHEA:43128"/>
        <dbReference type="Rhea" id="RHEA-COMP:10355"/>
        <dbReference type="Rhea" id="RHEA-COMP:10357"/>
        <dbReference type="ChEBI" id="CHEBI:15378"/>
        <dbReference type="ChEBI" id="CHEBI:57856"/>
        <dbReference type="ChEBI" id="CHEBI:59789"/>
        <dbReference type="ChEBI" id="CHEBI:74269"/>
        <dbReference type="ChEBI" id="CHEBI:74481"/>
        <dbReference type="EC" id="2.1.1.214"/>
    </reaction>
    <physiologicalReaction direction="left-to-right" evidence="1">
        <dbReference type="Rhea" id="RHEA:43129"/>
    </physiologicalReaction>
</comment>
<comment type="subunit">
    <text evidence="1">Part of the heterodimeric TRMT11-TRM112 methyltransferase complex; this complex forms an active tRNA methyltransferase, where TRMT112 acts as an activator of the catalytic subunit TRMT11.</text>
</comment>
<comment type="subcellular location">
    <subcellularLocation>
        <location evidence="1">Cytoplasm</location>
    </subcellularLocation>
</comment>
<comment type="alternative products">
    <event type="alternative splicing"/>
    <isoform>
        <id>Q9CWH5-1</id>
        <name>1</name>
        <sequence type="displayed"/>
    </isoform>
    <isoform>
        <id>Q9CWH5-2</id>
        <name>2</name>
        <sequence type="described" ref="VSP_017819 VSP_017820"/>
    </isoform>
</comment>
<comment type="similarity">
    <text evidence="2">Belongs to the class I-like SAM-binding methyltransferase superfamily. TRM11 methyltransferase family.</text>
</comment>
<protein>
    <recommendedName>
        <fullName evidence="1">tRNA (guanine(10)-N(2))-methyltransferase TRMT11</fullName>
        <ecNumber evidence="1">2.1.1.214</ecNumber>
    </recommendedName>
    <alternativeName>
        <fullName evidence="4">tRNA methyltransferase 11 homolog</fullName>
    </alternativeName>
</protein>
<keyword id="KW-0007">Acetylation</keyword>
<keyword id="KW-0025">Alternative splicing</keyword>
<keyword id="KW-0963">Cytoplasm</keyword>
<keyword id="KW-0489">Methyltransferase</keyword>
<keyword id="KW-1185">Reference proteome</keyword>
<keyword id="KW-0694">RNA-binding</keyword>
<keyword id="KW-0949">S-adenosyl-L-methionine</keyword>
<keyword id="KW-0808">Transferase</keyword>
<keyword id="KW-0819">tRNA processing</keyword>
<keyword id="KW-0820">tRNA-binding</keyword>
<proteinExistence type="evidence at protein level"/>
<sequence>MALPGSLNRYLLLMAQEHLEFRLPEIKSLLSVIGGQFTNSQETYGKSPFWILNIPSEDIARNLMKRTVCAKSIFELWGHGKSPEELYTSLKSYPVEKMVPYLHSDSTYKIKIHTFNKTLTQEEKVKRIDALEFLPFQGKVNLKKPQHVFSILEDYGLDPNSIPKDPHNIYFGRWIADGQRELIESYSVKKRHFIGNTSMDAGLSFIMTNHAKVKENDLVFDPFVGTGGLLIASAHFGAYVCGTDIDYNTVHGLGKASRKNQKWRGPDENIRANLRQYGLEKFYLDVLVSDASKPSWRKGTYFDAIITDPPYGIRESTRRSGSQKDIPKGIEKCPESHVPVSLSYHLSDMFFDLLNFAAETLVLGGRLVYWLPVYTPEYTEEMVPWHPCLRLISNCEQKLSSHTARRLITMEKVKEFENRDKYSHLLSDHFLPYQGHNSFREKYFSGVTKRIAKEEKCSHE</sequence>
<organism>
    <name type="scientific">Mus musculus</name>
    <name type="common">Mouse</name>
    <dbReference type="NCBI Taxonomy" id="10090"/>
    <lineage>
        <taxon>Eukaryota</taxon>
        <taxon>Metazoa</taxon>
        <taxon>Chordata</taxon>
        <taxon>Craniata</taxon>
        <taxon>Vertebrata</taxon>
        <taxon>Euteleostomi</taxon>
        <taxon>Mammalia</taxon>
        <taxon>Eutheria</taxon>
        <taxon>Euarchontoglires</taxon>
        <taxon>Glires</taxon>
        <taxon>Rodentia</taxon>
        <taxon>Myomorpha</taxon>
        <taxon>Muroidea</taxon>
        <taxon>Muridae</taxon>
        <taxon>Murinae</taxon>
        <taxon>Mus</taxon>
        <taxon>Mus</taxon>
    </lineage>
</organism>
<evidence type="ECO:0000250" key="1">
    <source>
        <dbReference type="UniProtKB" id="Q7Z4G4"/>
    </source>
</evidence>
<evidence type="ECO:0000255" key="2">
    <source>
        <dbReference type="PROSITE-ProRule" id="PRU00959"/>
    </source>
</evidence>
<evidence type="ECO:0000303" key="3">
    <source>
    </source>
</evidence>
<evidence type="ECO:0000312" key="4">
    <source>
        <dbReference type="MGI" id="MGI:1920931"/>
    </source>
</evidence>
<reference key="1">
    <citation type="submission" date="2002-07" db="EMBL/GenBank/DDBJ databases">
        <title>Molecular identification and conserved evolution of a novel RNA methylase protein gene in higher eukaryotic organisms.</title>
        <authorList>
            <person name="Chen Y."/>
            <person name="Huang C.-H."/>
        </authorList>
    </citation>
    <scope>NUCLEOTIDE SEQUENCE [MRNA] (ISOFORM 1)</scope>
</reference>
<reference key="2">
    <citation type="journal article" date="2005" name="Science">
        <title>The transcriptional landscape of the mammalian genome.</title>
        <authorList>
            <person name="Carninci P."/>
            <person name="Kasukawa T."/>
            <person name="Katayama S."/>
            <person name="Gough J."/>
            <person name="Frith M.C."/>
            <person name="Maeda N."/>
            <person name="Oyama R."/>
            <person name="Ravasi T."/>
            <person name="Lenhard B."/>
            <person name="Wells C."/>
            <person name="Kodzius R."/>
            <person name="Shimokawa K."/>
            <person name="Bajic V.B."/>
            <person name="Brenner S.E."/>
            <person name="Batalov S."/>
            <person name="Forrest A.R."/>
            <person name="Zavolan M."/>
            <person name="Davis M.J."/>
            <person name="Wilming L.G."/>
            <person name="Aidinis V."/>
            <person name="Allen J.E."/>
            <person name="Ambesi-Impiombato A."/>
            <person name="Apweiler R."/>
            <person name="Aturaliya R.N."/>
            <person name="Bailey T.L."/>
            <person name="Bansal M."/>
            <person name="Baxter L."/>
            <person name="Beisel K.W."/>
            <person name="Bersano T."/>
            <person name="Bono H."/>
            <person name="Chalk A.M."/>
            <person name="Chiu K.P."/>
            <person name="Choudhary V."/>
            <person name="Christoffels A."/>
            <person name="Clutterbuck D.R."/>
            <person name="Crowe M.L."/>
            <person name="Dalla E."/>
            <person name="Dalrymple B.P."/>
            <person name="de Bono B."/>
            <person name="Della Gatta G."/>
            <person name="di Bernardo D."/>
            <person name="Down T."/>
            <person name="Engstrom P."/>
            <person name="Fagiolini M."/>
            <person name="Faulkner G."/>
            <person name="Fletcher C.F."/>
            <person name="Fukushima T."/>
            <person name="Furuno M."/>
            <person name="Futaki S."/>
            <person name="Gariboldi M."/>
            <person name="Georgii-Hemming P."/>
            <person name="Gingeras T.R."/>
            <person name="Gojobori T."/>
            <person name="Green R.E."/>
            <person name="Gustincich S."/>
            <person name="Harbers M."/>
            <person name="Hayashi Y."/>
            <person name="Hensch T.K."/>
            <person name="Hirokawa N."/>
            <person name="Hill D."/>
            <person name="Huminiecki L."/>
            <person name="Iacono M."/>
            <person name="Ikeo K."/>
            <person name="Iwama A."/>
            <person name="Ishikawa T."/>
            <person name="Jakt M."/>
            <person name="Kanapin A."/>
            <person name="Katoh M."/>
            <person name="Kawasawa Y."/>
            <person name="Kelso J."/>
            <person name="Kitamura H."/>
            <person name="Kitano H."/>
            <person name="Kollias G."/>
            <person name="Krishnan S.P."/>
            <person name="Kruger A."/>
            <person name="Kummerfeld S.K."/>
            <person name="Kurochkin I.V."/>
            <person name="Lareau L.F."/>
            <person name="Lazarevic D."/>
            <person name="Lipovich L."/>
            <person name="Liu J."/>
            <person name="Liuni S."/>
            <person name="McWilliam S."/>
            <person name="Madan Babu M."/>
            <person name="Madera M."/>
            <person name="Marchionni L."/>
            <person name="Matsuda H."/>
            <person name="Matsuzawa S."/>
            <person name="Miki H."/>
            <person name="Mignone F."/>
            <person name="Miyake S."/>
            <person name="Morris K."/>
            <person name="Mottagui-Tabar S."/>
            <person name="Mulder N."/>
            <person name="Nakano N."/>
            <person name="Nakauchi H."/>
            <person name="Ng P."/>
            <person name="Nilsson R."/>
            <person name="Nishiguchi S."/>
            <person name="Nishikawa S."/>
            <person name="Nori F."/>
            <person name="Ohara O."/>
            <person name="Okazaki Y."/>
            <person name="Orlando V."/>
            <person name="Pang K.C."/>
            <person name="Pavan W.J."/>
            <person name="Pavesi G."/>
            <person name="Pesole G."/>
            <person name="Petrovsky N."/>
            <person name="Piazza S."/>
            <person name="Reed J."/>
            <person name="Reid J.F."/>
            <person name="Ring B.Z."/>
            <person name="Ringwald M."/>
            <person name="Rost B."/>
            <person name="Ruan Y."/>
            <person name="Salzberg S.L."/>
            <person name="Sandelin A."/>
            <person name="Schneider C."/>
            <person name="Schoenbach C."/>
            <person name="Sekiguchi K."/>
            <person name="Semple C.A."/>
            <person name="Seno S."/>
            <person name="Sessa L."/>
            <person name="Sheng Y."/>
            <person name="Shibata Y."/>
            <person name="Shimada H."/>
            <person name="Shimada K."/>
            <person name="Silva D."/>
            <person name="Sinclair B."/>
            <person name="Sperling S."/>
            <person name="Stupka E."/>
            <person name="Sugiura K."/>
            <person name="Sultana R."/>
            <person name="Takenaka Y."/>
            <person name="Taki K."/>
            <person name="Tammoja K."/>
            <person name="Tan S.L."/>
            <person name="Tang S."/>
            <person name="Taylor M.S."/>
            <person name="Tegner J."/>
            <person name="Teichmann S.A."/>
            <person name="Ueda H.R."/>
            <person name="van Nimwegen E."/>
            <person name="Verardo R."/>
            <person name="Wei C.L."/>
            <person name="Yagi K."/>
            <person name="Yamanishi H."/>
            <person name="Zabarovsky E."/>
            <person name="Zhu S."/>
            <person name="Zimmer A."/>
            <person name="Hide W."/>
            <person name="Bult C."/>
            <person name="Grimmond S.M."/>
            <person name="Teasdale R.D."/>
            <person name="Liu E.T."/>
            <person name="Brusic V."/>
            <person name="Quackenbush J."/>
            <person name="Wahlestedt C."/>
            <person name="Mattick J.S."/>
            <person name="Hume D.A."/>
            <person name="Kai C."/>
            <person name="Sasaki D."/>
            <person name="Tomaru Y."/>
            <person name="Fukuda S."/>
            <person name="Kanamori-Katayama M."/>
            <person name="Suzuki M."/>
            <person name="Aoki J."/>
            <person name="Arakawa T."/>
            <person name="Iida J."/>
            <person name="Imamura K."/>
            <person name="Itoh M."/>
            <person name="Kato T."/>
            <person name="Kawaji H."/>
            <person name="Kawagashira N."/>
            <person name="Kawashima T."/>
            <person name="Kojima M."/>
            <person name="Kondo S."/>
            <person name="Konno H."/>
            <person name="Nakano K."/>
            <person name="Ninomiya N."/>
            <person name="Nishio T."/>
            <person name="Okada M."/>
            <person name="Plessy C."/>
            <person name="Shibata K."/>
            <person name="Shiraki T."/>
            <person name="Suzuki S."/>
            <person name="Tagami M."/>
            <person name="Waki K."/>
            <person name="Watahiki A."/>
            <person name="Okamura-Oho Y."/>
            <person name="Suzuki H."/>
            <person name="Kawai J."/>
            <person name="Hayashizaki Y."/>
        </authorList>
    </citation>
    <scope>NUCLEOTIDE SEQUENCE [LARGE SCALE MRNA] (ISOFORM 1)</scope>
    <source>
        <strain>C57BL/6J</strain>
    </source>
</reference>
<reference key="3">
    <citation type="journal article" date="2004" name="Genome Res.">
        <title>The status, quality, and expansion of the NIH full-length cDNA project: the Mammalian Gene Collection (MGC).</title>
        <authorList>
            <consortium name="The MGC Project Team"/>
        </authorList>
    </citation>
    <scope>NUCLEOTIDE SEQUENCE [LARGE SCALE MRNA] (ISOFORM 2)</scope>
    <source>
        <tissue>Limb</tissue>
    </source>
</reference>
<reference key="4">
    <citation type="journal article" date="2010" name="Cell">
        <title>A tissue-specific atlas of mouse protein phosphorylation and expression.</title>
        <authorList>
            <person name="Huttlin E.L."/>
            <person name="Jedrychowski M.P."/>
            <person name="Elias J.E."/>
            <person name="Goswami T."/>
            <person name="Rad R."/>
            <person name="Beausoleil S.A."/>
            <person name="Villen J."/>
            <person name="Haas W."/>
            <person name="Sowa M.E."/>
            <person name="Gygi S.P."/>
        </authorList>
    </citation>
    <scope>IDENTIFICATION BY MASS SPECTROMETRY [LARGE SCALE ANALYSIS]</scope>
    <source>
        <tissue>Spleen</tissue>
    </source>
</reference>
<accession>Q9CWH5</accession>
<accession>Q80Y71</accession>
<feature type="initiator methionine" description="Removed" evidence="1">
    <location>
        <position position="1"/>
    </location>
</feature>
<feature type="chain" id="PRO_0000230289" description="tRNA (guanine(10)-N(2))-methyltransferase TRMT11">
    <location>
        <begin position="2"/>
        <end position="460"/>
    </location>
</feature>
<feature type="modified residue" description="N-acetylalanine" evidence="1">
    <location>
        <position position="2"/>
    </location>
</feature>
<feature type="splice variant" id="VSP_017819" description="In isoform 2." evidence="3">
    <location>
        <begin position="1"/>
        <end position="225"/>
    </location>
</feature>
<feature type="splice variant" id="VSP_017820" description="In isoform 2." evidence="3">
    <original>T</original>
    <variation>M</variation>
    <location>
        <position position="226"/>
    </location>
</feature>